<sequence>MTITVDIEIEDEAWTTAEADAEALVWRAAQAVLDAHEDIEGQGIVILLTDDDSVQALNRDFRKKDYATNVLSFPSPPNPEGQIGDIALAYGVCAREAAEQGKPLAHHLQHLVAHGVLHLLGYDHERDDEAEAMEALEREILAGLDVPDPYASDEEGR</sequence>
<proteinExistence type="inferred from homology"/>
<reference key="1">
    <citation type="journal article" date="2001" name="Proc. Natl. Acad. Sci. U.S.A.">
        <title>Complete genome sequence of Caulobacter crescentus.</title>
        <authorList>
            <person name="Nierman W.C."/>
            <person name="Feldblyum T.V."/>
            <person name="Laub M.T."/>
            <person name="Paulsen I.T."/>
            <person name="Nelson K.E."/>
            <person name="Eisen J.A."/>
            <person name="Heidelberg J.F."/>
            <person name="Alley M.R.K."/>
            <person name="Ohta N."/>
            <person name="Maddock J.R."/>
            <person name="Potocka I."/>
            <person name="Nelson W.C."/>
            <person name="Newton A."/>
            <person name="Stephens C."/>
            <person name="Phadke N.D."/>
            <person name="Ely B."/>
            <person name="DeBoy R.T."/>
            <person name="Dodson R.J."/>
            <person name="Durkin A.S."/>
            <person name="Gwinn M.L."/>
            <person name="Haft D.H."/>
            <person name="Kolonay J.F."/>
            <person name="Smit J."/>
            <person name="Craven M.B."/>
            <person name="Khouri H.M."/>
            <person name="Shetty J."/>
            <person name="Berry K.J."/>
            <person name="Utterback T.R."/>
            <person name="Tran K."/>
            <person name="Wolf A.M."/>
            <person name="Vamathevan J.J."/>
            <person name="Ermolaeva M.D."/>
            <person name="White O."/>
            <person name="Salzberg S.L."/>
            <person name="Venter J.C."/>
            <person name="Shapiro L."/>
            <person name="Fraser C.M."/>
        </authorList>
    </citation>
    <scope>NUCLEOTIDE SEQUENCE [LARGE SCALE GENOMIC DNA]</scope>
    <source>
        <strain>ATCC 19089 / CIP 103742 / CB 15</strain>
    </source>
</reference>
<accession>Q9AC14</accession>
<organism>
    <name type="scientific">Caulobacter vibrioides (strain ATCC 19089 / CIP 103742 / CB 15)</name>
    <name type="common">Caulobacter crescentus</name>
    <dbReference type="NCBI Taxonomy" id="190650"/>
    <lineage>
        <taxon>Bacteria</taxon>
        <taxon>Pseudomonadati</taxon>
        <taxon>Pseudomonadota</taxon>
        <taxon>Alphaproteobacteria</taxon>
        <taxon>Caulobacterales</taxon>
        <taxon>Caulobacteraceae</taxon>
        <taxon>Caulobacter</taxon>
    </lineage>
</organism>
<feature type="chain" id="PRO_0000102433" description="Endoribonuclease YbeY">
    <location>
        <begin position="1"/>
        <end position="157"/>
    </location>
</feature>
<feature type="binding site" evidence="1">
    <location>
        <position position="114"/>
    </location>
    <ligand>
        <name>Zn(2+)</name>
        <dbReference type="ChEBI" id="CHEBI:29105"/>
        <note>catalytic</note>
    </ligand>
</feature>
<feature type="binding site" evidence="1">
    <location>
        <position position="118"/>
    </location>
    <ligand>
        <name>Zn(2+)</name>
        <dbReference type="ChEBI" id="CHEBI:29105"/>
        <note>catalytic</note>
    </ligand>
</feature>
<feature type="binding site" evidence="1">
    <location>
        <position position="124"/>
    </location>
    <ligand>
        <name>Zn(2+)</name>
        <dbReference type="ChEBI" id="CHEBI:29105"/>
        <note>catalytic</note>
    </ligand>
</feature>
<dbReference type="EC" id="3.1.-.-" evidence="1"/>
<dbReference type="EMBL" id="AE005673">
    <property type="protein sequence ID" value="AAK22042.1"/>
    <property type="molecule type" value="Genomic_DNA"/>
</dbReference>
<dbReference type="PIR" id="F87255">
    <property type="entry name" value="F87255"/>
</dbReference>
<dbReference type="RefSeq" id="NP_418874.1">
    <property type="nucleotide sequence ID" value="NC_002696.2"/>
</dbReference>
<dbReference type="SMR" id="Q9AC14"/>
<dbReference type="STRING" id="190650.CC_0054"/>
<dbReference type="EnsemblBacteria" id="AAK22042">
    <property type="protein sequence ID" value="AAK22042"/>
    <property type="gene ID" value="CC_0054"/>
</dbReference>
<dbReference type="KEGG" id="ccr:CC_0054"/>
<dbReference type="PATRIC" id="fig|190650.5.peg.52"/>
<dbReference type="eggNOG" id="COG0319">
    <property type="taxonomic scope" value="Bacteria"/>
</dbReference>
<dbReference type="HOGENOM" id="CLU_106710_0_0_5"/>
<dbReference type="BioCyc" id="CAULO:CC0054-MONOMER"/>
<dbReference type="Proteomes" id="UP000001816">
    <property type="component" value="Chromosome"/>
</dbReference>
<dbReference type="GO" id="GO:0005737">
    <property type="term" value="C:cytoplasm"/>
    <property type="evidence" value="ECO:0007669"/>
    <property type="project" value="UniProtKB-SubCell"/>
</dbReference>
<dbReference type="GO" id="GO:0004222">
    <property type="term" value="F:metalloendopeptidase activity"/>
    <property type="evidence" value="ECO:0007669"/>
    <property type="project" value="InterPro"/>
</dbReference>
<dbReference type="GO" id="GO:0004521">
    <property type="term" value="F:RNA endonuclease activity"/>
    <property type="evidence" value="ECO:0007669"/>
    <property type="project" value="UniProtKB-UniRule"/>
</dbReference>
<dbReference type="GO" id="GO:0008270">
    <property type="term" value="F:zinc ion binding"/>
    <property type="evidence" value="ECO:0007669"/>
    <property type="project" value="UniProtKB-UniRule"/>
</dbReference>
<dbReference type="GO" id="GO:0006364">
    <property type="term" value="P:rRNA processing"/>
    <property type="evidence" value="ECO:0007669"/>
    <property type="project" value="UniProtKB-UniRule"/>
</dbReference>
<dbReference type="Gene3D" id="3.40.390.30">
    <property type="entry name" value="Metalloproteases ('zincins'), catalytic domain"/>
    <property type="match status" value="1"/>
</dbReference>
<dbReference type="HAMAP" id="MF_00009">
    <property type="entry name" value="Endoribonucl_YbeY"/>
    <property type="match status" value="1"/>
</dbReference>
<dbReference type="InterPro" id="IPR023091">
    <property type="entry name" value="MetalPrtase_cat_dom_sf_prd"/>
</dbReference>
<dbReference type="InterPro" id="IPR002036">
    <property type="entry name" value="YbeY"/>
</dbReference>
<dbReference type="InterPro" id="IPR020549">
    <property type="entry name" value="YbeY_CS"/>
</dbReference>
<dbReference type="NCBIfam" id="TIGR00043">
    <property type="entry name" value="rRNA maturation RNase YbeY"/>
    <property type="match status" value="1"/>
</dbReference>
<dbReference type="PANTHER" id="PTHR46986">
    <property type="entry name" value="ENDORIBONUCLEASE YBEY, CHLOROPLASTIC"/>
    <property type="match status" value="1"/>
</dbReference>
<dbReference type="PANTHER" id="PTHR46986:SF1">
    <property type="entry name" value="ENDORIBONUCLEASE YBEY, CHLOROPLASTIC"/>
    <property type="match status" value="1"/>
</dbReference>
<dbReference type="Pfam" id="PF02130">
    <property type="entry name" value="YbeY"/>
    <property type="match status" value="1"/>
</dbReference>
<dbReference type="SUPFAM" id="SSF55486">
    <property type="entry name" value="Metalloproteases ('zincins'), catalytic domain"/>
    <property type="match status" value="1"/>
</dbReference>
<dbReference type="PROSITE" id="PS01306">
    <property type="entry name" value="UPF0054"/>
    <property type="match status" value="1"/>
</dbReference>
<name>YBEY_CAUVC</name>
<protein>
    <recommendedName>
        <fullName evidence="1">Endoribonuclease YbeY</fullName>
        <ecNumber evidence="1">3.1.-.-</ecNumber>
    </recommendedName>
</protein>
<comment type="function">
    <text evidence="1">Single strand-specific metallo-endoribonuclease involved in late-stage 70S ribosome quality control and in maturation of the 3' terminus of the 16S rRNA.</text>
</comment>
<comment type="cofactor">
    <cofactor evidence="1">
        <name>Zn(2+)</name>
        <dbReference type="ChEBI" id="CHEBI:29105"/>
    </cofactor>
    <text evidence="1">Binds 1 zinc ion.</text>
</comment>
<comment type="subcellular location">
    <subcellularLocation>
        <location evidence="1">Cytoplasm</location>
    </subcellularLocation>
</comment>
<comment type="similarity">
    <text evidence="1">Belongs to the endoribonuclease YbeY family.</text>
</comment>
<keyword id="KW-0963">Cytoplasm</keyword>
<keyword id="KW-0255">Endonuclease</keyword>
<keyword id="KW-0378">Hydrolase</keyword>
<keyword id="KW-0479">Metal-binding</keyword>
<keyword id="KW-0540">Nuclease</keyword>
<keyword id="KW-1185">Reference proteome</keyword>
<keyword id="KW-0690">Ribosome biogenesis</keyword>
<keyword id="KW-0698">rRNA processing</keyword>
<keyword id="KW-0862">Zinc</keyword>
<evidence type="ECO:0000255" key="1">
    <source>
        <dbReference type="HAMAP-Rule" id="MF_00009"/>
    </source>
</evidence>
<gene>
    <name evidence="1" type="primary">ybeY</name>
    <name type="ordered locus">CC_0054</name>
</gene>